<accession>Q2RSR4</accession>
<reference key="1">
    <citation type="journal article" date="2011" name="Stand. Genomic Sci.">
        <title>Complete genome sequence of Rhodospirillum rubrum type strain (S1).</title>
        <authorList>
            <person name="Munk A.C."/>
            <person name="Copeland A."/>
            <person name="Lucas S."/>
            <person name="Lapidus A."/>
            <person name="Del Rio T.G."/>
            <person name="Barry K."/>
            <person name="Detter J.C."/>
            <person name="Hammon N."/>
            <person name="Israni S."/>
            <person name="Pitluck S."/>
            <person name="Brettin T."/>
            <person name="Bruce D."/>
            <person name="Han C."/>
            <person name="Tapia R."/>
            <person name="Gilna P."/>
            <person name="Schmutz J."/>
            <person name="Larimer F."/>
            <person name="Land M."/>
            <person name="Kyrpides N.C."/>
            <person name="Mavromatis K."/>
            <person name="Richardson P."/>
            <person name="Rohde M."/>
            <person name="Goeker M."/>
            <person name="Klenk H.P."/>
            <person name="Zhang Y."/>
            <person name="Roberts G.P."/>
            <person name="Reslewic S."/>
            <person name="Schwartz D.C."/>
        </authorList>
    </citation>
    <scope>NUCLEOTIDE SEQUENCE [LARGE SCALE GENOMIC DNA]</scope>
    <source>
        <strain>ATCC 11170 / ATH 1.1.1 / DSM 467 / LMG 4362 / NCIMB 8255 / S1</strain>
    </source>
</reference>
<evidence type="ECO:0000255" key="1">
    <source>
        <dbReference type="HAMAP-Rule" id="MF_01270"/>
    </source>
</evidence>
<name>ANMK_RHORT</name>
<organism>
    <name type="scientific">Rhodospirillum rubrum (strain ATCC 11170 / ATH 1.1.1 / DSM 467 / LMG 4362 / NCIMB 8255 / S1)</name>
    <dbReference type="NCBI Taxonomy" id="269796"/>
    <lineage>
        <taxon>Bacteria</taxon>
        <taxon>Pseudomonadati</taxon>
        <taxon>Pseudomonadota</taxon>
        <taxon>Alphaproteobacteria</taxon>
        <taxon>Rhodospirillales</taxon>
        <taxon>Rhodospirillaceae</taxon>
        <taxon>Rhodospirillum</taxon>
    </lineage>
</organism>
<feature type="chain" id="PRO_0000250049" description="Anhydro-N-acetylmuramic acid kinase">
    <location>
        <begin position="1"/>
        <end position="375"/>
    </location>
</feature>
<feature type="binding site" evidence="1">
    <location>
        <begin position="18"/>
        <end position="25"/>
    </location>
    <ligand>
        <name>ATP</name>
        <dbReference type="ChEBI" id="CHEBI:30616"/>
    </ligand>
</feature>
<dbReference type="EC" id="2.7.1.170" evidence="1"/>
<dbReference type="EMBL" id="CP000230">
    <property type="protein sequence ID" value="ABC22831.1"/>
    <property type="molecule type" value="Genomic_DNA"/>
</dbReference>
<dbReference type="RefSeq" id="WP_011389784.1">
    <property type="nucleotide sequence ID" value="NC_007643.1"/>
</dbReference>
<dbReference type="RefSeq" id="YP_427118.1">
    <property type="nucleotide sequence ID" value="NC_007643.1"/>
</dbReference>
<dbReference type="SMR" id="Q2RSR4"/>
<dbReference type="STRING" id="269796.Rru_A2031"/>
<dbReference type="EnsemblBacteria" id="ABC22831">
    <property type="protein sequence ID" value="ABC22831"/>
    <property type="gene ID" value="Rru_A2031"/>
</dbReference>
<dbReference type="KEGG" id="rru:Rru_A2031"/>
<dbReference type="PATRIC" id="fig|269796.9.peg.2118"/>
<dbReference type="eggNOG" id="COG2377">
    <property type="taxonomic scope" value="Bacteria"/>
</dbReference>
<dbReference type="HOGENOM" id="CLU_038782_3_0_5"/>
<dbReference type="PhylomeDB" id="Q2RSR4"/>
<dbReference type="UniPathway" id="UPA00343"/>
<dbReference type="UniPathway" id="UPA00544"/>
<dbReference type="Proteomes" id="UP000001929">
    <property type="component" value="Chromosome"/>
</dbReference>
<dbReference type="GO" id="GO:0005524">
    <property type="term" value="F:ATP binding"/>
    <property type="evidence" value="ECO:0007669"/>
    <property type="project" value="UniProtKB-UniRule"/>
</dbReference>
<dbReference type="GO" id="GO:0016301">
    <property type="term" value="F:kinase activity"/>
    <property type="evidence" value="ECO:0007669"/>
    <property type="project" value="UniProtKB-KW"/>
</dbReference>
<dbReference type="GO" id="GO:0016773">
    <property type="term" value="F:phosphotransferase activity, alcohol group as acceptor"/>
    <property type="evidence" value="ECO:0007669"/>
    <property type="project" value="UniProtKB-UniRule"/>
</dbReference>
<dbReference type="GO" id="GO:0097175">
    <property type="term" value="P:1,6-anhydro-N-acetyl-beta-muramic acid catabolic process"/>
    <property type="evidence" value="ECO:0007669"/>
    <property type="project" value="UniProtKB-UniRule"/>
</dbReference>
<dbReference type="GO" id="GO:0006040">
    <property type="term" value="P:amino sugar metabolic process"/>
    <property type="evidence" value="ECO:0007669"/>
    <property type="project" value="InterPro"/>
</dbReference>
<dbReference type="GO" id="GO:0009254">
    <property type="term" value="P:peptidoglycan turnover"/>
    <property type="evidence" value="ECO:0007669"/>
    <property type="project" value="UniProtKB-UniRule"/>
</dbReference>
<dbReference type="Gene3D" id="3.30.420.40">
    <property type="match status" value="2"/>
</dbReference>
<dbReference type="HAMAP" id="MF_01270">
    <property type="entry name" value="AnhMurNAc_kinase"/>
    <property type="match status" value="1"/>
</dbReference>
<dbReference type="InterPro" id="IPR005338">
    <property type="entry name" value="Anhydro_N_Ac-Mur_kinase"/>
</dbReference>
<dbReference type="InterPro" id="IPR043129">
    <property type="entry name" value="ATPase_NBD"/>
</dbReference>
<dbReference type="NCBIfam" id="NF007141">
    <property type="entry name" value="PRK09585.1-5"/>
    <property type="match status" value="1"/>
</dbReference>
<dbReference type="PANTHER" id="PTHR30605">
    <property type="entry name" value="ANHYDRO-N-ACETYLMURAMIC ACID KINASE"/>
    <property type="match status" value="1"/>
</dbReference>
<dbReference type="PANTHER" id="PTHR30605:SF0">
    <property type="entry name" value="ANHYDRO-N-ACETYLMURAMIC ACID KINASE"/>
    <property type="match status" value="1"/>
</dbReference>
<dbReference type="Pfam" id="PF03702">
    <property type="entry name" value="AnmK"/>
    <property type="match status" value="1"/>
</dbReference>
<dbReference type="SUPFAM" id="SSF53067">
    <property type="entry name" value="Actin-like ATPase domain"/>
    <property type="match status" value="1"/>
</dbReference>
<sequence length="375" mass="38947">MDLRESDGAVWAVGLMSGTSMDGIDAALLRTDGHQVFEVGPALTVAYDEATRARIRALLGTPPGRSVAEVADLARDLTERHAEVAARLIGQSGVTPAVVGFHGQTLLHRPEARLSVQIGDGALLARRLGVAVVNDLRQADVRAGGQGAPLVPAYHLALAKGLARPLAVLNLGGVGNVTWIGEGDQPPVAFDTGPGNALIDDWMRRRRGVAMDADGALARSGRIDGAALEALLGHDYFRKPAPKSLDRDAFSLEPVNGLSDGDGAATLVAFTAASVARARDWMPAPPKRWLVCGGGRRNGAIMEALTRGLGVAVDPVEAVGWDGDALEAQAFAFLAVRGARGLPLTWPTTTGAPRPLTGGTYWPAATVLGASAVAR</sequence>
<protein>
    <recommendedName>
        <fullName evidence="1">Anhydro-N-acetylmuramic acid kinase</fullName>
        <ecNumber evidence="1">2.7.1.170</ecNumber>
    </recommendedName>
    <alternativeName>
        <fullName evidence="1">AnhMurNAc kinase</fullName>
    </alternativeName>
</protein>
<proteinExistence type="inferred from homology"/>
<gene>
    <name evidence="1" type="primary">anmK</name>
    <name type="ordered locus">Rru_A2031</name>
</gene>
<keyword id="KW-0067">ATP-binding</keyword>
<keyword id="KW-0119">Carbohydrate metabolism</keyword>
<keyword id="KW-0418">Kinase</keyword>
<keyword id="KW-0547">Nucleotide-binding</keyword>
<keyword id="KW-1185">Reference proteome</keyword>
<keyword id="KW-0808">Transferase</keyword>
<comment type="function">
    <text evidence="1">Catalyzes the specific phosphorylation of 1,6-anhydro-N-acetylmuramic acid (anhMurNAc) with the simultaneous cleavage of the 1,6-anhydro ring, generating MurNAc-6-P. Is required for the utilization of anhMurNAc either imported from the medium or derived from its own cell wall murein, and thus plays a role in cell wall recycling.</text>
</comment>
<comment type="catalytic activity">
    <reaction evidence="1">
        <text>1,6-anhydro-N-acetyl-beta-muramate + ATP + H2O = N-acetyl-D-muramate 6-phosphate + ADP + H(+)</text>
        <dbReference type="Rhea" id="RHEA:24952"/>
        <dbReference type="ChEBI" id="CHEBI:15377"/>
        <dbReference type="ChEBI" id="CHEBI:15378"/>
        <dbReference type="ChEBI" id="CHEBI:30616"/>
        <dbReference type="ChEBI" id="CHEBI:58690"/>
        <dbReference type="ChEBI" id="CHEBI:58722"/>
        <dbReference type="ChEBI" id="CHEBI:456216"/>
        <dbReference type="EC" id="2.7.1.170"/>
    </reaction>
</comment>
<comment type="pathway">
    <text evidence="1">Amino-sugar metabolism; 1,6-anhydro-N-acetylmuramate degradation.</text>
</comment>
<comment type="pathway">
    <text evidence="1">Cell wall biogenesis; peptidoglycan recycling.</text>
</comment>
<comment type="similarity">
    <text evidence="1">Belongs to the anhydro-N-acetylmuramic acid kinase family.</text>
</comment>